<gene>
    <name type="primary">yqxI</name>
    <name type="synonym">yqdE</name>
    <name type="ordered locus">BSU25890</name>
</gene>
<dbReference type="EMBL" id="M59232">
    <property type="protein sequence ID" value="AAA62677.1"/>
    <property type="molecule type" value="Genomic_DNA"/>
</dbReference>
<dbReference type="EMBL" id="D32216">
    <property type="protein sequence ID" value="BAA06961.1"/>
    <property type="molecule type" value="Genomic_DNA"/>
</dbReference>
<dbReference type="EMBL" id="D84432">
    <property type="protein sequence ID" value="BAA12425.1"/>
    <property type="molecule type" value="Genomic_DNA"/>
</dbReference>
<dbReference type="EMBL" id="AL009126">
    <property type="protein sequence ID" value="CAB14530.1"/>
    <property type="molecule type" value="Genomic_DNA"/>
</dbReference>
<dbReference type="PIR" id="D44816">
    <property type="entry name" value="D44816"/>
</dbReference>
<dbReference type="RefSeq" id="NP_390466.1">
    <property type="nucleotide sequence ID" value="NC_000964.3"/>
</dbReference>
<dbReference type="RefSeq" id="WP_004399085.1">
    <property type="nucleotide sequence ID" value="NZ_OZ025638.1"/>
</dbReference>
<dbReference type="SMR" id="P24812"/>
<dbReference type="FunCoup" id="P24812">
    <property type="interactions" value="19"/>
</dbReference>
<dbReference type="STRING" id="224308.BSU25890"/>
<dbReference type="PaxDb" id="224308-BSU25890"/>
<dbReference type="DNASU" id="937775"/>
<dbReference type="EnsemblBacteria" id="CAB14530">
    <property type="protein sequence ID" value="CAB14530"/>
    <property type="gene ID" value="BSU_25890"/>
</dbReference>
<dbReference type="GeneID" id="937775"/>
<dbReference type="KEGG" id="bsu:BSU25890"/>
<dbReference type="PATRIC" id="fig|224308.179.peg.2814"/>
<dbReference type="InParanoid" id="P24812"/>
<dbReference type="OrthoDB" id="9882882at2"/>
<dbReference type="BioCyc" id="BSUB:BSU25890-MONOMER"/>
<dbReference type="Proteomes" id="UP000001570">
    <property type="component" value="Chromosome"/>
</dbReference>
<keyword id="KW-1185">Reference proteome</keyword>
<reference key="1">
    <citation type="journal article" date="1991" name="J. Gen. Microbiol.">
        <title>Cloning, expression, sequence analysis and biochemical characterization of an autolytic amidase of Bacillus subtilis 168 trpC2.</title>
        <authorList>
            <person name="Foster S.J."/>
        </authorList>
    </citation>
    <scope>NUCLEOTIDE SEQUENCE [GENOMIC DNA]</scope>
    <source>
        <strain>168</strain>
    </source>
</reference>
<reference key="2">
    <citation type="journal article" date="1995" name="Microbiology">
        <title>Complete nucleotide sequence of a skin element excised by DNA rearrangement during sporulation in Bacillus subtilis.</title>
        <authorList>
            <person name="Takemaru K."/>
            <person name="Mizuno M."/>
            <person name="Sato T."/>
            <person name="Takeuchi M."/>
            <person name="Kobayashi Y."/>
        </authorList>
    </citation>
    <scope>NUCLEOTIDE SEQUENCE [GENOMIC DNA]</scope>
    <source>
        <strain>168 / JH642</strain>
    </source>
</reference>
<reference key="3">
    <citation type="journal article" date="1996" name="Microbiology">
        <title>Systematic sequencing of the 283 kb 210 degrees-232 degrees region of the Bacillus subtilis genome containing the skin element and many sporulation genes.</title>
        <authorList>
            <person name="Mizuno M."/>
            <person name="Masuda S."/>
            <person name="Takemaru K."/>
            <person name="Hosono S."/>
            <person name="Sato T."/>
            <person name="Takeuchi M."/>
            <person name="Kobayashi Y."/>
        </authorList>
    </citation>
    <scope>NUCLEOTIDE SEQUENCE [GENOMIC DNA]</scope>
    <source>
        <strain>168 / JH642</strain>
    </source>
</reference>
<reference key="4">
    <citation type="journal article" date="1997" name="Nature">
        <title>The complete genome sequence of the Gram-positive bacterium Bacillus subtilis.</title>
        <authorList>
            <person name="Kunst F."/>
            <person name="Ogasawara N."/>
            <person name="Moszer I."/>
            <person name="Albertini A.M."/>
            <person name="Alloni G."/>
            <person name="Azevedo V."/>
            <person name="Bertero M.G."/>
            <person name="Bessieres P."/>
            <person name="Bolotin A."/>
            <person name="Borchert S."/>
            <person name="Borriss R."/>
            <person name="Boursier L."/>
            <person name="Brans A."/>
            <person name="Braun M."/>
            <person name="Brignell S.C."/>
            <person name="Bron S."/>
            <person name="Brouillet S."/>
            <person name="Bruschi C.V."/>
            <person name="Caldwell B."/>
            <person name="Capuano V."/>
            <person name="Carter N.M."/>
            <person name="Choi S.-K."/>
            <person name="Codani J.-J."/>
            <person name="Connerton I.F."/>
            <person name="Cummings N.J."/>
            <person name="Daniel R.A."/>
            <person name="Denizot F."/>
            <person name="Devine K.M."/>
            <person name="Duesterhoeft A."/>
            <person name="Ehrlich S.D."/>
            <person name="Emmerson P.T."/>
            <person name="Entian K.-D."/>
            <person name="Errington J."/>
            <person name="Fabret C."/>
            <person name="Ferrari E."/>
            <person name="Foulger D."/>
            <person name="Fritz C."/>
            <person name="Fujita M."/>
            <person name="Fujita Y."/>
            <person name="Fuma S."/>
            <person name="Galizzi A."/>
            <person name="Galleron N."/>
            <person name="Ghim S.-Y."/>
            <person name="Glaser P."/>
            <person name="Goffeau A."/>
            <person name="Golightly E.J."/>
            <person name="Grandi G."/>
            <person name="Guiseppi G."/>
            <person name="Guy B.J."/>
            <person name="Haga K."/>
            <person name="Haiech J."/>
            <person name="Harwood C.R."/>
            <person name="Henaut A."/>
            <person name="Hilbert H."/>
            <person name="Holsappel S."/>
            <person name="Hosono S."/>
            <person name="Hullo M.-F."/>
            <person name="Itaya M."/>
            <person name="Jones L.-M."/>
            <person name="Joris B."/>
            <person name="Karamata D."/>
            <person name="Kasahara Y."/>
            <person name="Klaerr-Blanchard M."/>
            <person name="Klein C."/>
            <person name="Kobayashi Y."/>
            <person name="Koetter P."/>
            <person name="Koningstein G."/>
            <person name="Krogh S."/>
            <person name="Kumano M."/>
            <person name="Kurita K."/>
            <person name="Lapidus A."/>
            <person name="Lardinois S."/>
            <person name="Lauber J."/>
            <person name="Lazarevic V."/>
            <person name="Lee S.-M."/>
            <person name="Levine A."/>
            <person name="Liu H."/>
            <person name="Masuda S."/>
            <person name="Mauel C."/>
            <person name="Medigue C."/>
            <person name="Medina N."/>
            <person name="Mellado R.P."/>
            <person name="Mizuno M."/>
            <person name="Moestl D."/>
            <person name="Nakai S."/>
            <person name="Noback M."/>
            <person name="Noone D."/>
            <person name="O'Reilly M."/>
            <person name="Ogawa K."/>
            <person name="Ogiwara A."/>
            <person name="Oudega B."/>
            <person name="Park S.-H."/>
            <person name="Parro V."/>
            <person name="Pohl T.M."/>
            <person name="Portetelle D."/>
            <person name="Porwollik S."/>
            <person name="Prescott A.M."/>
            <person name="Presecan E."/>
            <person name="Pujic P."/>
            <person name="Purnelle B."/>
            <person name="Rapoport G."/>
            <person name="Rey M."/>
            <person name="Reynolds S."/>
            <person name="Rieger M."/>
            <person name="Rivolta C."/>
            <person name="Rocha E."/>
            <person name="Roche B."/>
            <person name="Rose M."/>
            <person name="Sadaie Y."/>
            <person name="Sato T."/>
            <person name="Scanlan E."/>
            <person name="Schleich S."/>
            <person name="Schroeter R."/>
            <person name="Scoffone F."/>
            <person name="Sekiguchi J."/>
            <person name="Sekowska A."/>
            <person name="Seror S.J."/>
            <person name="Serror P."/>
            <person name="Shin B.-S."/>
            <person name="Soldo B."/>
            <person name="Sorokin A."/>
            <person name="Tacconi E."/>
            <person name="Takagi T."/>
            <person name="Takahashi H."/>
            <person name="Takemaru K."/>
            <person name="Takeuchi M."/>
            <person name="Tamakoshi A."/>
            <person name="Tanaka T."/>
            <person name="Terpstra P."/>
            <person name="Tognoni A."/>
            <person name="Tosato V."/>
            <person name="Uchiyama S."/>
            <person name="Vandenbol M."/>
            <person name="Vannier F."/>
            <person name="Vassarotti A."/>
            <person name="Viari A."/>
            <person name="Wambutt R."/>
            <person name="Wedler E."/>
            <person name="Wedler H."/>
            <person name="Weitzenegger T."/>
            <person name="Winters P."/>
            <person name="Wipat A."/>
            <person name="Yamamoto H."/>
            <person name="Yamane K."/>
            <person name="Yasumoto K."/>
            <person name="Yata K."/>
            <person name="Yoshida K."/>
            <person name="Yoshikawa H.-F."/>
            <person name="Zumstein E."/>
            <person name="Yoshikawa H."/>
            <person name="Danchin A."/>
        </authorList>
    </citation>
    <scope>NUCLEOTIDE SEQUENCE [LARGE SCALE GENOMIC DNA]</scope>
    <source>
        <strain>168</strain>
    </source>
</reference>
<feature type="chain" id="PRO_0000049847" description="Uncharacterized protein YqxI">
    <location>
        <begin position="1"/>
        <end position="159"/>
    </location>
</feature>
<protein>
    <recommendedName>
        <fullName>Uncharacterized protein YqxI</fullName>
    </recommendedName>
    <alternativeName>
        <fullName>ORF4</fullName>
    </alternativeName>
</protein>
<accession>P24812</accession>
<sequence length="159" mass="17009">MFKKLLLATSALTFSLSLVLPLDGHAKAQEVTLQAQQEVTYQTPVKLSELPTNTTEQSGEFHTNGIKKWIAKEAMKATASALRHGGRIVGEVVDELGGSAGKTFAKHTDDVADALDELVKRGDVVEDAIIDTVSSYLIDAGVKSSTARTIASVFTFLAF</sequence>
<organism>
    <name type="scientific">Bacillus subtilis (strain 168)</name>
    <dbReference type="NCBI Taxonomy" id="224308"/>
    <lineage>
        <taxon>Bacteria</taxon>
        <taxon>Bacillati</taxon>
        <taxon>Bacillota</taxon>
        <taxon>Bacilli</taxon>
        <taxon>Bacillales</taxon>
        <taxon>Bacillaceae</taxon>
        <taxon>Bacillus</taxon>
    </lineage>
</organism>
<proteinExistence type="predicted"/>
<name>YQXI_BACSU</name>